<feature type="chain" id="PRO_0000209326" description="Sugar efflux transporter B">
    <location>
        <begin position="1"/>
        <end position="395"/>
    </location>
</feature>
<feature type="transmembrane region" description="Helical" evidence="1">
    <location>
        <begin position="15"/>
        <end position="35"/>
    </location>
</feature>
<feature type="transmembrane region" description="Helical" evidence="1">
    <location>
        <begin position="50"/>
        <end position="70"/>
    </location>
</feature>
<feature type="transmembrane region" description="Helical" evidence="1">
    <location>
        <begin position="81"/>
        <end position="101"/>
    </location>
</feature>
<feature type="transmembrane region" description="Helical" evidence="1">
    <location>
        <begin position="103"/>
        <end position="123"/>
    </location>
</feature>
<feature type="transmembrane region" description="Helical" evidence="1">
    <location>
        <begin position="136"/>
        <end position="156"/>
    </location>
</feature>
<feature type="transmembrane region" description="Helical" evidence="1">
    <location>
        <begin position="170"/>
        <end position="190"/>
    </location>
</feature>
<feature type="transmembrane region" description="Helical" evidence="1">
    <location>
        <begin position="209"/>
        <end position="229"/>
    </location>
</feature>
<feature type="transmembrane region" description="Helical" evidence="1">
    <location>
        <begin position="246"/>
        <end position="266"/>
    </location>
</feature>
<feature type="transmembrane region" description="Helical" evidence="1">
    <location>
        <begin position="272"/>
        <end position="292"/>
    </location>
</feature>
<feature type="transmembrane region" description="Helical" evidence="1">
    <location>
        <begin position="299"/>
        <end position="319"/>
    </location>
</feature>
<feature type="transmembrane region" description="Helical" evidence="1">
    <location>
        <begin position="333"/>
        <end position="353"/>
    </location>
</feature>
<feature type="transmembrane region" description="Helical" evidence="1">
    <location>
        <begin position="365"/>
        <end position="385"/>
    </location>
</feature>
<keyword id="KW-0997">Cell inner membrane</keyword>
<keyword id="KW-1003">Cell membrane</keyword>
<keyword id="KW-0472">Membrane</keyword>
<keyword id="KW-0762">Sugar transport</keyword>
<keyword id="KW-0812">Transmembrane</keyword>
<keyword id="KW-1133">Transmembrane helix</keyword>
<keyword id="KW-0813">Transport</keyword>
<comment type="function">
    <text evidence="2">Involved in the efflux of sugars. The physiological role may be the reduction of the intracellular concentration of toxic sugars or sugar metabolites. Transports IPTG, lactose and melibiose.</text>
</comment>
<comment type="subcellular location">
    <subcellularLocation>
        <location evidence="4">Cell inner membrane</location>
        <topology evidence="4">Multi-pass membrane protein</topology>
    </subcellularLocation>
</comment>
<comment type="induction">
    <text evidence="2">Activated by glucose, and to a lesser extent by other metabolizable sugars such as galacturonate, arabinose and melibiose. Repressed by cyclic AMP receptor protein (CRP).</text>
</comment>
<comment type="similarity">
    <text evidence="3">Belongs to the major facilitator superfamily. SotB (TC 2.A.1.2) family.</text>
</comment>
<dbReference type="EMBL" id="AJ249181">
    <property type="protein sequence ID" value="CAB53453.1"/>
    <property type="molecule type" value="Genomic_DNA"/>
</dbReference>
<dbReference type="SMR" id="Q9S3J9"/>
<dbReference type="TCDB" id="2.A.1.2.18">
    <property type="family name" value="the major facilitator superfamily (mfs)"/>
</dbReference>
<dbReference type="GO" id="GO:0005886">
    <property type="term" value="C:plasma membrane"/>
    <property type="evidence" value="ECO:0007669"/>
    <property type="project" value="UniProtKB-SubCell"/>
</dbReference>
<dbReference type="GO" id="GO:0015144">
    <property type="term" value="F:carbohydrate transmembrane transporter activity"/>
    <property type="evidence" value="ECO:0007669"/>
    <property type="project" value="UniProtKB-UniRule"/>
</dbReference>
<dbReference type="CDD" id="cd17324">
    <property type="entry name" value="MFS_NepI_like"/>
    <property type="match status" value="1"/>
</dbReference>
<dbReference type="Gene3D" id="1.20.1250.20">
    <property type="entry name" value="MFS general substrate transporter like domains"/>
    <property type="match status" value="1"/>
</dbReference>
<dbReference type="HAMAP" id="MF_00517">
    <property type="entry name" value="MFS_SotB"/>
    <property type="match status" value="1"/>
</dbReference>
<dbReference type="InterPro" id="IPR011701">
    <property type="entry name" value="MFS"/>
</dbReference>
<dbReference type="InterPro" id="IPR020846">
    <property type="entry name" value="MFS_dom"/>
</dbReference>
<dbReference type="InterPro" id="IPR050189">
    <property type="entry name" value="MFS_Efflux_Transporters"/>
</dbReference>
<dbReference type="InterPro" id="IPR036259">
    <property type="entry name" value="MFS_trans_sf"/>
</dbReference>
<dbReference type="InterPro" id="IPR023495">
    <property type="entry name" value="Sugar_effux_transptr_put"/>
</dbReference>
<dbReference type="NCBIfam" id="NF002921">
    <property type="entry name" value="PRK03545.1"/>
    <property type="match status" value="1"/>
</dbReference>
<dbReference type="PANTHER" id="PTHR43124">
    <property type="entry name" value="PURINE EFFLUX PUMP PBUE"/>
    <property type="match status" value="1"/>
</dbReference>
<dbReference type="PANTHER" id="PTHR43124:SF4">
    <property type="entry name" value="SUGAR EFFLUX TRANSPORTER"/>
    <property type="match status" value="1"/>
</dbReference>
<dbReference type="Pfam" id="PF07690">
    <property type="entry name" value="MFS_1"/>
    <property type="match status" value="1"/>
</dbReference>
<dbReference type="SUPFAM" id="SSF103473">
    <property type="entry name" value="MFS general substrate transporter"/>
    <property type="match status" value="1"/>
</dbReference>
<dbReference type="PROSITE" id="PS50850">
    <property type="entry name" value="MFS"/>
    <property type="match status" value="1"/>
</dbReference>
<gene>
    <name type="primary">sotB</name>
</gene>
<evidence type="ECO:0000255" key="1"/>
<evidence type="ECO:0000269" key="2">
    <source>
    </source>
</evidence>
<evidence type="ECO:0000305" key="3"/>
<evidence type="ECO:0000305" key="4">
    <source>
    </source>
</evidence>
<name>SOTB_DICCH</name>
<accession>Q9S3J9</accession>
<organism>
    <name type="scientific">Dickeya chrysanthemi</name>
    <name type="common">Pectobacterium chrysanthemi</name>
    <name type="synonym">Erwinia chrysanthemi</name>
    <dbReference type="NCBI Taxonomy" id="556"/>
    <lineage>
        <taxon>Bacteria</taxon>
        <taxon>Pseudomonadati</taxon>
        <taxon>Pseudomonadota</taxon>
        <taxon>Gammaproteobacteria</taxon>
        <taxon>Enterobacterales</taxon>
        <taxon>Pectobacteriaceae</taxon>
        <taxon>Dickeya</taxon>
    </lineage>
</organism>
<reference key="1">
    <citation type="journal article" date="2000" name="J. Bacteriol.">
        <title>Characterization of SotA and SotB, two Erwinia chrysanthemi proteins which modify isopropyl-beta-D-thiogalactopyranoside and lactose induction of the Escherichia coli lac promoter.</title>
        <authorList>
            <person name="Condemine G."/>
        </authorList>
    </citation>
    <scope>NUCLEOTIDE SEQUENCE [GENOMIC DNA]</scope>
    <scope>CHARACTERIZATION</scope>
    <scope>FUNCTION</scope>
    <scope>SUBCELLULAR LOCATION</scope>
    <scope>INDUCTION</scope>
    <source>
        <strain>A350</strain>
    </source>
</reference>
<proteinExistence type="evidence at protein level"/>
<sequence>MTSASPSRSTAWLRVVTLAIAAFIFNTTEFIPVGLLSDIANSFAMKTEDVGLMITIYAWIVAVASLICMLLTSGIERRKLLIGLFSLFILSHLLSAVAWNFTVLVISRAGVALAHSVFWSITASLAIRMAPPGKRAQALGLIATGSSLAMVLGLPLGRVIGQYLGWRVTFLTIAAGATVAMILLARLLPLLPSEHSGSLGSVPKLFRRPALVGIYLLTVVVVTAHFTAYSYIEPFIQTVAGLPENFTTLILLLFGCAGIAGSMLYSRYSDRFPIGFLVTAMLLLLACLTLLMPLSGYPFGLTLLCLVWGLAMMSIGLAMQAKVLSLAPDASDVAMSIFSGLFNLGIGGGALLGSQVSLHLGMDKIGYVGAPLVLVALFATLLSVYRSVRLVHSRV</sequence>
<protein>
    <recommendedName>
        <fullName>Sugar efflux transporter B</fullName>
    </recommendedName>
</protein>